<evidence type="ECO:0000255" key="1">
    <source>
        <dbReference type="PROSITE-ProRule" id="PRU01118"/>
    </source>
</evidence>
<evidence type="ECO:0000256" key="2">
    <source>
        <dbReference type="SAM" id="MobiDB-lite"/>
    </source>
</evidence>
<evidence type="ECO:0000305" key="3"/>
<comment type="function">
    <text>May be a virulence determinant.</text>
</comment>
<comment type="subcellular location">
    <subcellularLocation>
        <location>Cell outer membrane</location>
        <topology>Lipid-anchor</topology>
    </subcellularLocation>
</comment>
<comment type="similarity">
    <text evidence="3">Belongs to the E.coli NlpD/Haemophilus LppB family.</text>
</comment>
<keyword id="KW-0998">Cell outer membrane</keyword>
<keyword id="KW-0449">Lipoprotein</keyword>
<keyword id="KW-0472">Membrane</keyword>
<keyword id="KW-0564">Palmitate</keyword>
<keyword id="KW-1185">Reference proteome</keyword>
<keyword id="KW-0732">Signal</keyword>
<keyword id="KW-0843">Virulence</keyword>
<gene>
    <name type="primary">lppB</name>
    <name type="ordered locus">HI_0706</name>
</gene>
<reference key="1">
    <citation type="journal article" date="1995" name="Science">
        <title>Whole-genome random sequencing and assembly of Haemophilus influenzae Rd.</title>
        <authorList>
            <person name="Fleischmann R.D."/>
            <person name="Adams M.D."/>
            <person name="White O."/>
            <person name="Clayton R.A."/>
            <person name="Kirkness E.F."/>
            <person name="Kerlavage A.R."/>
            <person name="Bult C.J."/>
            <person name="Tomb J.-F."/>
            <person name="Dougherty B.A."/>
            <person name="Merrick J.M."/>
            <person name="McKenney K."/>
            <person name="Sutton G.G."/>
            <person name="FitzHugh W."/>
            <person name="Fields C.A."/>
            <person name="Gocayne J.D."/>
            <person name="Scott J.D."/>
            <person name="Shirley R."/>
            <person name="Liu L.-I."/>
            <person name="Glodek A."/>
            <person name="Kelley J.M."/>
            <person name="Weidman J.F."/>
            <person name="Phillips C.A."/>
            <person name="Spriggs T."/>
            <person name="Hedblom E."/>
            <person name="Cotton M.D."/>
            <person name="Utterback T.R."/>
            <person name="Hanna M.C."/>
            <person name="Nguyen D.T."/>
            <person name="Saudek D.M."/>
            <person name="Brandon R.C."/>
            <person name="Fine L.D."/>
            <person name="Fritchman J.L."/>
            <person name="Fuhrmann J.L."/>
            <person name="Geoghagen N.S.M."/>
            <person name="Gnehm C.L."/>
            <person name="McDonald L.A."/>
            <person name="Small K.V."/>
            <person name="Fraser C.M."/>
            <person name="Smith H.O."/>
            <person name="Venter J.C."/>
        </authorList>
    </citation>
    <scope>NUCLEOTIDE SEQUENCE [LARGE SCALE GENOMIC DNA]</scope>
    <source>
        <strain>ATCC 51907 / DSM 11121 / KW20 / Rd</strain>
    </source>
</reference>
<name>LPPB_HAEIN</name>
<dbReference type="EMBL" id="L42023">
    <property type="protein sequence ID" value="AAC22363.1"/>
    <property type="molecule type" value="Genomic_DNA"/>
</dbReference>
<dbReference type="PIR" id="F64087">
    <property type="entry name" value="F64087"/>
</dbReference>
<dbReference type="RefSeq" id="NP_438864.1">
    <property type="nucleotide sequence ID" value="NC_000907.1"/>
</dbReference>
<dbReference type="SMR" id="P44833"/>
<dbReference type="STRING" id="71421.HI_0706"/>
<dbReference type="EnsemblBacteria" id="AAC22363">
    <property type="protein sequence ID" value="AAC22363"/>
    <property type="gene ID" value="HI_0706"/>
</dbReference>
<dbReference type="KEGG" id="hin:HI_0706"/>
<dbReference type="PATRIC" id="fig|71421.8.peg.736"/>
<dbReference type="eggNOG" id="COG1388">
    <property type="taxonomic scope" value="Bacteria"/>
</dbReference>
<dbReference type="eggNOG" id="COG4942">
    <property type="taxonomic scope" value="Bacteria"/>
</dbReference>
<dbReference type="HOGENOM" id="CLU_029425_1_1_6"/>
<dbReference type="OrthoDB" id="9795421at2"/>
<dbReference type="PhylomeDB" id="P44833"/>
<dbReference type="BioCyc" id="HINF71421:G1GJ1-739-MONOMER"/>
<dbReference type="Proteomes" id="UP000000579">
    <property type="component" value="Chromosome"/>
</dbReference>
<dbReference type="GO" id="GO:0032153">
    <property type="term" value="C:cell division site"/>
    <property type="evidence" value="ECO:0000318"/>
    <property type="project" value="GO_Central"/>
</dbReference>
<dbReference type="GO" id="GO:0009279">
    <property type="term" value="C:cell outer membrane"/>
    <property type="evidence" value="ECO:0000318"/>
    <property type="project" value="GO_Central"/>
</dbReference>
<dbReference type="GO" id="GO:0004222">
    <property type="term" value="F:metalloendopeptidase activity"/>
    <property type="evidence" value="ECO:0000318"/>
    <property type="project" value="GO_Central"/>
</dbReference>
<dbReference type="CDD" id="cd00118">
    <property type="entry name" value="LysM"/>
    <property type="match status" value="1"/>
</dbReference>
<dbReference type="CDD" id="cd12797">
    <property type="entry name" value="M23_peptidase"/>
    <property type="match status" value="1"/>
</dbReference>
<dbReference type="FunFam" id="2.70.70.10:FF:000005">
    <property type="entry name" value="Hypothetical lipoprotein YgeR"/>
    <property type="match status" value="1"/>
</dbReference>
<dbReference type="Gene3D" id="2.70.70.10">
    <property type="entry name" value="Glucose Permease (Domain IIA)"/>
    <property type="match status" value="1"/>
</dbReference>
<dbReference type="Gene3D" id="3.10.350.10">
    <property type="entry name" value="LysM domain"/>
    <property type="match status" value="1"/>
</dbReference>
<dbReference type="InterPro" id="IPR050570">
    <property type="entry name" value="Cell_wall_metabolism_enzyme"/>
</dbReference>
<dbReference type="InterPro" id="IPR011055">
    <property type="entry name" value="Dup_hybrid_motif"/>
</dbReference>
<dbReference type="InterPro" id="IPR018392">
    <property type="entry name" value="LysM_dom"/>
</dbReference>
<dbReference type="InterPro" id="IPR036779">
    <property type="entry name" value="LysM_dom_sf"/>
</dbReference>
<dbReference type="InterPro" id="IPR016047">
    <property type="entry name" value="Peptidase_M23"/>
</dbReference>
<dbReference type="NCBIfam" id="NF008123">
    <property type="entry name" value="PRK10871.1"/>
    <property type="match status" value="1"/>
</dbReference>
<dbReference type="PANTHER" id="PTHR21666:SF263">
    <property type="entry name" value="MUREIN HYDROLASE ACTIVATOR NLPD"/>
    <property type="match status" value="1"/>
</dbReference>
<dbReference type="PANTHER" id="PTHR21666">
    <property type="entry name" value="PEPTIDASE-RELATED"/>
    <property type="match status" value="1"/>
</dbReference>
<dbReference type="Pfam" id="PF01476">
    <property type="entry name" value="LysM"/>
    <property type="match status" value="1"/>
</dbReference>
<dbReference type="Pfam" id="PF01551">
    <property type="entry name" value="Peptidase_M23"/>
    <property type="match status" value="1"/>
</dbReference>
<dbReference type="SMART" id="SM00257">
    <property type="entry name" value="LysM"/>
    <property type="match status" value="1"/>
</dbReference>
<dbReference type="SUPFAM" id="SSF51261">
    <property type="entry name" value="Duplicated hybrid motif"/>
    <property type="match status" value="1"/>
</dbReference>
<dbReference type="PROSITE" id="PS51782">
    <property type="entry name" value="LYSM"/>
    <property type="match status" value="1"/>
</dbReference>
<dbReference type="PROSITE" id="PS51257">
    <property type="entry name" value="PROKAR_LIPOPROTEIN"/>
    <property type="match status" value="1"/>
</dbReference>
<accession>P44833</accession>
<organism>
    <name type="scientific">Haemophilus influenzae (strain ATCC 51907 / DSM 11121 / KW20 / Rd)</name>
    <dbReference type="NCBI Taxonomy" id="71421"/>
    <lineage>
        <taxon>Bacteria</taxon>
        <taxon>Pseudomonadati</taxon>
        <taxon>Pseudomonadota</taxon>
        <taxon>Gammaproteobacteria</taxon>
        <taxon>Pasteurellales</taxon>
        <taxon>Pasteurellaceae</taxon>
        <taxon>Haemophilus</taxon>
    </lineage>
</organism>
<proteinExistence type="inferred from homology"/>
<sequence length="405" mass="42505">MKKSFLLLPLSLVVLSACTSNFPAPISDADGNFSPSVIQSVNGSNVGGAWQPEIQKNSLPTTGNMVTPQQNFQPINQQPTMPTAPAQPAFQPSPKTVVSAPTVQTKTVTKTVADCVDGQHINIPRNPNTNAPDYSKISKGSYKGNTYKVNKGDTMFLIAYLAGIDVKELAALNNLSEPYNLSLGQVLKISNCDIKTVTTTVSVKQPAVTASTATPVKPAVTYTPGANGTQIGSDGTIIGPIKSEAGTSPSVPVATSSTQVTSSVNNANSTPINSNVVAPIASNVVWQWPTSGNIIQGFSSTDGGNKGIDISGSRGQAVKAAAAGRIVYAGNALRGYGNLIIIKHNDDFLSAYAHNDKILVADQQEVKAGQDIAKMGSSGTNTVKLHFEIRYKGKSVDPVRYLPRH</sequence>
<protein>
    <recommendedName>
        <fullName>Outer membrane antigenic lipoprotein B</fullName>
    </recommendedName>
</protein>
<feature type="signal peptide" evidence="3">
    <location>
        <begin position="1"/>
        <end position="17"/>
    </location>
</feature>
<feature type="chain" id="PRO_0000018034" description="Outer membrane antigenic lipoprotein B">
    <location>
        <begin position="18"/>
        <end position="405"/>
    </location>
</feature>
<feature type="domain" description="LysM" evidence="1">
    <location>
        <begin position="145"/>
        <end position="189"/>
    </location>
</feature>
<feature type="region of interest" description="Disordered" evidence="2">
    <location>
        <begin position="81"/>
        <end position="102"/>
    </location>
</feature>
<feature type="compositionally biased region" description="Low complexity" evidence="2">
    <location>
        <begin position="81"/>
        <end position="94"/>
    </location>
</feature>
<feature type="lipid moiety-binding region" description="N-palmitoyl cysteine" evidence="3">
    <location>
        <position position="18"/>
    </location>
</feature>
<feature type="lipid moiety-binding region" description="S-diacylglycerol cysteine" evidence="3">
    <location>
        <position position="18"/>
    </location>
</feature>